<organism>
    <name type="scientific">Pongo abelii</name>
    <name type="common">Sumatran orangutan</name>
    <name type="synonym">Pongo pygmaeus abelii</name>
    <dbReference type="NCBI Taxonomy" id="9601"/>
    <lineage>
        <taxon>Eukaryota</taxon>
        <taxon>Metazoa</taxon>
        <taxon>Chordata</taxon>
        <taxon>Craniata</taxon>
        <taxon>Vertebrata</taxon>
        <taxon>Euteleostomi</taxon>
        <taxon>Mammalia</taxon>
        <taxon>Eutheria</taxon>
        <taxon>Euarchontoglires</taxon>
        <taxon>Primates</taxon>
        <taxon>Haplorrhini</taxon>
        <taxon>Catarrhini</taxon>
        <taxon>Hominidae</taxon>
        <taxon>Pongo</taxon>
    </lineage>
</organism>
<name>STMN4_PONAB</name>
<comment type="function">
    <text evidence="1">Exhibits microtubule-destabilizing activity.</text>
</comment>
<comment type="subcellular location">
    <subcellularLocation>
        <location evidence="1">Golgi apparatus</location>
    </subcellularLocation>
    <subcellularLocation>
        <location evidence="1">Cell projection</location>
        <location evidence="1">Growth cone</location>
    </subcellularLocation>
    <subcellularLocation>
        <location evidence="1">Cell projection</location>
        <location evidence="1">Axon</location>
    </subcellularLocation>
</comment>
<comment type="similarity">
    <text evidence="6">Belongs to the stathmin family.</text>
</comment>
<reference key="1">
    <citation type="submission" date="2004-11" db="EMBL/GenBank/DDBJ databases">
        <authorList>
            <consortium name="The German cDNA consortium"/>
        </authorList>
    </citation>
    <scope>NUCLEOTIDE SEQUENCE [LARGE SCALE MRNA]</scope>
    <source>
        <tissue>Brain cortex</tissue>
    </source>
</reference>
<protein>
    <recommendedName>
        <fullName>Stathmin-4</fullName>
    </recommendedName>
</protein>
<accession>Q5R4C5</accession>
<evidence type="ECO:0000250" key="1"/>
<evidence type="ECO:0000250" key="2">
    <source>
        <dbReference type="UniProtKB" id="P63043"/>
    </source>
</evidence>
<evidence type="ECO:0000255" key="3"/>
<evidence type="ECO:0000255" key="4">
    <source>
        <dbReference type="PROSITE-ProRule" id="PRU00998"/>
    </source>
</evidence>
<evidence type="ECO:0000256" key="5">
    <source>
        <dbReference type="SAM" id="MobiDB-lite"/>
    </source>
</evidence>
<evidence type="ECO:0000305" key="6"/>
<sequence>MTLAAYKEKMKELPLVSLFCSCFLADPLNKSSYKYEADTVDLNWCVISDMEVIELNKCTSGQSFEVILKPPSFDGVPEFNASLPRRRDPSLEEIQKKLEAAEERRKYQEAELLKHLAEKREHEREVIQKAIEENNNFIKMAKEKLAQKMESNKENREAHLAAMLERLQEKDKHAEEVRKNKELKEEASR</sequence>
<feature type="chain" id="PRO_0000236209" description="Stathmin-4">
    <location>
        <begin position="1"/>
        <end position="189"/>
    </location>
</feature>
<feature type="domain" description="SLD" evidence="4">
    <location>
        <begin position="48"/>
        <end position="189"/>
    </location>
</feature>
<feature type="region of interest" description="Disordered" evidence="5">
    <location>
        <begin position="168"/>
        <end position="189"/>
    </location>
</feature>
<feature type="coiled-coil region" evidence="3">
    <location>
        <begin position="90"/>
        <end position="188"/>
    </location>
</feature>
<feature type="modified residue" description="Phosphoserine" evidence="2">
    <location>
        <position position="90"/>
    </location>
</feature>
<feature type="lipid moiety-binding region" description="S-palmitoyl cysteine" evidence="1">
    <location>
        <position position="20"/>
    </location>
</feature>
<feature type="lipid moiety-binding region" description="S-palmitoyl cysteine" evidence="1">
    <location>
        <position position="22"/>
    </location>
</feature>
<keyword id="KW-0966">Cell projection</keyword>
<keyword id="KW-0175">Coiled coil</keyword>
<keyword id="KW-0333">Golgi apparatus</keyword>
<keyword id="KW-0449">Lipoprotein</keyword>
<keyword id="KW-0564">Palmitate</keyword>
<keyword id="KW-0597">Phosphoprotein</keyword>
<keyword id="KW-1185">Reference proteome</keyword>
<dbReference type="EMBL" id="CR861327">
    <property type="protein sequence ID" value="CAH93391.1"/>
    <property type="molecule type" value="mRNA"/>
</dbReference>
<dbReference type="RefSeq" id="NP_001127659.1">
    <property type="nucleotide sequence ID" value="NM_001134187.1"/>
</dbReference>
<dbReference type="SMR" id="Q5R4C5"/>
<dbReference type="FunCoup" id="Q5R4C5">
    <property type="interactions" value="33"/>
</dbReference>
<dbReference type="STRING" id="9601.ENSPPYP00000020689"/>
<dbReference type="GeneID" id="100174741"/>
<dbReference type="KEGG" id="pon:100174741"/>
<dbReference type="CTD" id="81551"/>
<dbReference type="HOGENOM" id="CLU_102026_0_1_1"/>
<dbReference type="InParanoid" id="Q5R4C5"/>
<dbReference type="OrthoDB" id="5986631at2759"/>
<dbReference type="Proteomes" id="UP000001595">
    <property type="component" value="Chromosome 8"/>
</dbReference>
<dbReference type="GO" id="GO:0005794">
    <property type="term" value="C:Golgi apparatus"/>
    <property type="evidence" value="ECO:0007669"/>
    <property type="project" value="UniProtKB-SubCell"/>
</dbReference>
<dbReference type="GO" id="GO:0030426">
    <property type="term" value="C:growth cone"/>
    <property type="evidence" value="ECO:0007669"/>
    <property type="project" value="UniProtKB-SubCell"/>
</dbReference>
<dbReference type="GO" id="GO:0015631">
    <property type="term" value="F:tubulin binding"/>
    <property type="evidence" value="ECO:0007669"/>
    <property type="project" value="TreeGrafter"/>
</dbReference>
<dbReference type="GO" id="GO:0007019">
    <property type="term" value="P:microtubule depolymerization"/>
    <property type="evidence" value="ECO:0007669"/>
    <property type="project" value="TreeGrafter"/>
</dbReference>
<dbReference type="GO" id="GO:0031175">
    <property type="term" value="P:neuron projection development"/>
    <property type="evidence" value="ECO:0007669"/>
    <property type="project" value="TreeGrafter"/>
</dbReference>
<dbReference type="GO" id="GO:0031110">
    <property type="term" value="P:regulation of microtubule polymerization or depolymerization"/>
    <property type="evidence" value="ECO:0007669"/>
    <property type="project" value="InterPro"/>
</dbReference>
<dbReference type="Gene3D" id="6.10.280.30">
    <property type="match status" value="1"/>
</dbReference>
<dbReference type="InterPro" id="IPR030514">
    <property type="entry name" value="Stathmin_CS"/>
</dbReference>
<dbReference type="InterPro" id="IPR000956">
    <property type="entry name" value="Stathmin_fam"/>
</dbReference>
<dbReference type="InterPro" id="IPR036002">
    <property type="entry name" value="Stathmin_sf"/>
</dbReference>
<dbReference type="PANTHER" id="PTHR10104">
    <property type="entry name" value="STATHMIN"/>
    <property type="match status" value="1"/>
</dbReference>
<dbReference type="PANTHER" id="PTHR10104:SF6">
    <property type="entry name" value="STATHMIN-4"/>
    <property type="match status" value="1"/>
</dbReference>
<dbReference type="Pfam" id="PF00836">
    <property type="entry name" value="Stathmin"/>
    <property type="match status" value="1"/>
</dbReference>
<dbReference type="PIRSF" id="PIRSF002285">
    <property type="entry name" value="Stathmin"/>
    <property type="match status" value="1"/>
</dbReference>
<dbReference type="PRINTS" id="PR00345">
    <property type="entry name" value="STATHMIN"/>
</dbReference>
<dbReference type="SUPFAM" id="SSF101494">
    <property type="entry name" value="Stathmin"/>
    <property type="match status" value="1"/>
</dbReference>
<dbReference type="PROSITE" id="PS00563">
    <property type="entry name" value="STATHMIN_1"/>
    <property type="match status" value="1"/>
</dbReference>
<dbReference type="PROSITE" id="PS01041">
    <property type="entry name" value="STATHMIN_2"/>
    <property type="match status" value="1"/>
</dbReference>
<dbReference type="PROSITE" id="PS51663">
    <property type="entry name" value="STATHMIN_3"/>
    <property type="match status" value="1"/>
</dbReference>
<gene>
    <name type="primary">STMN4</name>
</gene>
<proteinExistence type="evidence at transcript level"/>